<proteinExistence type="inferred from homology"/>
<sequence>MAKRVHLFDWHKEHAKKIEEFAGWEMPIWYSSIKEEHLAVRNAVGVFDVSHMGEILFKGKDALKFLQYTTTNDISKPPAISGTYTLVLNERGAIKDETLVFNMGNNEYLMICDADAFEKLYAWFTYLKKTIEQFTKLDLEIELKTYDIAMFAVQGPKARDLAMDLFGIDINEMWWFQGRWVELDGIKMLLSRSGYTGENGFEVYIEDLNPYHPDEEKRGKPEKALHVWERILEEGQKYGIKPAGLGARDTLRLEAGYTLYGNDTKELQLLSTDIDEVTPLQANLEFAIYWDKDFIGKDALLKQKEKGLGRKLVHFKMLEKSVPREGYKVYANGELIGEVTSGTLSPLLNIGIGIAFVKEEYAKPGVEIEIDIRGTRKKAITVTPPFYDPKKYGLFREE</sequence>
<organism>
    <name type="scientific">Pyrococcus furiosus (strain ATCC 43587 / DSM 3638 / JCM 8422 / Vc1)</name>
    <dbReference type="NCBI Taxonomy" id="186497"/>
    <lineage>
        <taxon>Archaea</taxon>
        <taxon>Methanobacteriati</taxon>
        <taxon>Methanobacteriota</taxon>
        <taxon>Thermococci</taxon>
        <taxon>Thermococcales</taxon>
        <taxon>Thermococcaceae</taxon>
        <taxon>Pyrococcus</taxon>
    </lineage>
</organism>
<comment type="function">
    <text evidence="1">The glycine cleavage system catalyzes the degradation of glycine.</text>
</comment>
<comment type="catalytic activity">
    <reaction evidence="1">
        <text>N(6)-[(R)-S(8)-aminomethyldihydrolipoyl]-L-lysyl-[protein] + (6S)-5,6,7,8-tetrahydrofolate = N(6)-[(R)-dihydrolipoyl]-L-lysyl-[protein] + (6R)-5,10-methylene-5,6,7,8-tetrahydrofolate + NH4(+)</text>
        <dbReference type="Rhea" id="RHEA:16945"/>
        <dbReference type="Rhea" id="RHEA-COMP:10475"/>
        <dbReference type="Rhea" id="RHEA-COMP:10492"/>
        <dbReference type="ChEBI" id="CHEBI:15636"/>
        <dbReference type="ChEBI" id="CHEBI:28938"/>
        <dbReference type="ChEBI" id="CHEBI:57453"/>
        <dbReference type="ChEBI" id="CHEBI:83100"/>
        <dbReference type="ChEBI" id="CHEBI:83143"/>
        <dbReference type="EC" id="2.1.2.10"/>
    </reaction>
</comment>
<comment type="subunit">
    <text evidence="1">The glycine cleavage system is composed of four proteins: P, T, L and H.</text>
</comment>
<comment type="similarity">
    <text evidence="1">Belongs to the GcvT family.</text>
</comment>
<accession>Q8U185</accession>
<name>GCST_PYRFU</name>
<keyword id="KW-0032">Aminotransferase</keyword>
<keyword id="KW-1185">Reference proteome</keyword>
<keyword id="KW-0808">Transferase</keyword>
<evidence type="ECO:0000255" key="1">
    <source>
        <dbReference type="HAMAP-Rule" id="MF_00259"/>
    </source>
</evidence>
<dbReference type="EC" id="2.1.2.10" evidence="1"/>
<dbReference type="EMBL" id="AE009950">
    <property type="protein sequence ID" value="AAL81465.1"/>
    <property type="molecule type" value="Genomic_DNA"/>
</dbReference>
<dbReference type="RefSeq" id="WP_011012487.1">
    <property type="nucleotide sequence ID" value="NZ_CP023154.1"/>
</dbReference>
<dbReference type="SMR" id="Q8U185"/>
<dbReference type="STRING" id="186497.PF1341"/>
<dbReference type="PaxDb" id="186497-PF1341"/>
<dbReference type="GeneID" id="41713144"/>
<dbReference type="KEGG" id="pfu:PF1341"/>
<dbReference type="PATRIC" id="fig|186497.12.peg.1404"/>
<dbReference type="eggNOG" id="arCOG00756">
    <property type="taxonomic scope" value="Archaea"/>
</dbReference>
<dbReference type="HOGENOM" id="CLU_007884_10_2_2"/>
<dbReference type="OrthoDB" id="2001at2157"/>
<dbReference type="PhylomeDB" id="Q8U185"/>
<dbReference type="Proteomes" id="UP000001013">
    <property type="component" value="Chromosome"/>
</dbReference>
<dbReference type="GO" id="GO:0005960">
    <property type="term" value="C:glycine cleavage complex"/>
    <property type="evidence" value="ECO:0007669"/>
    <property type="project" value="InterPro"/>
</dbReference>
<dbReference type="GO" id="GO:0004047">
    <property type="term" value="F:aminomethyltransferase activity"/>
    <property type="evidence" value="ECO:0007669"/>
    <property type="project" value="UniProtKB-UniRule"/>
</dbReference>
<dbReference type="GO" id="GO:0008483">
    <property type="term" value="F:transaminase activity"/>
    <property type="evidence" value="ECO:0007669"/>
    <property type="project" value="UniProtKB-KW"/>
</dbReference>
<dbReference type="GO" id="GO:0019464">
    <property type="term" value="P:glycine decarboxylation via glycine cleavage system"/>
    <property type="evidence" value="ECO:0007669"/>
    <property type="project" value="UniProtKB-UniRule"/>
</dbReference>
<dbReference type="FunFam" id="2.40.30.110:FF:000003">
    <property type="entry name" value="Aminomethyltransferase"/>
    <property type="match status" value="1"/>
</dbReference>
<dbReference type="Gene3D" id="2.40.30.110">
    <property type="entry name" value="Aminomethyltransferase beta-barrel domains"/>
    <property type="match status" value="1"/>
</dbReference>
<dbReference type="Gene3D" id="3.30.70.1400">
    <property type="entry name" value="Aminomethyltransferase beta-barrel domains"/>
    <property type="match status" value="1"/>
</dbReference>
<dbReference type="Gene3D" id="4.10.1250.10">
    <property type="entry name" value="Aminomethyltransferase fragment"/>
    <property type="match status" value="1"/>
</dbReference>
<dbReference type="Gene3D" id="3.30.1360.120">
    <property type="entry name" value="Probable tRNA modification gtpase trme, domain 1"/>
    <property type="match status" value="1"/>
</dbReference>
<dbReference type="HAMAP" id="MF_00259">
    <property type="entry name" value="GcvT"/>
    <property type="match status" value="1"/>
</dbReference>
<dbReference type="InterPro" id="IPR006223">
    <property type="entry name" value="GCS_T"/>
</dbReference>
<dbReference type="InterPro" id="IPR022903">
    <property type="entry name" value="GCS_T_bac"/>
</dbReference>
<dbReference type="InterPro" id="IPR013977">
    <property type="entry name" value="GCST_C"/>
</dbReference>
<dbReference type="InterPro" id="IPR006222">
    <property type="entry name" value="GCV_T_N"/>
</dbReference>
<dbReference type="InterPro" id="IPR028896">
    <property type="entry name" value="GcvT/YgfZ/DmdA"/>
</dbReference>
<dbReference type="InterPro" id="IPR029043">
    <property type="entry name" value="GcvT/YgfZ_C"/>
</dbReference>
<dbReference type="InterPro" id="IPR027266">
    <property type="entry name" value="TrmE/GcvT_dom1"/>
</dbReference>
<dbReference type="NCBIfam" id="TIGR00528">
    <property type="entry name" value="gcvT"/>
    <property type="match status" value="1"/>
</dbReference>
<dbReference type="NCBIfam" id="NF001567">
    <property type="entry name" value="PRK00389.1"/>
    <property type="match status" value="1"/>
</dbReference>
<dbReference type="PANTHER" id="PTHR43757">
    <property type="entry name" value="AMINOMETHYLTRANSFERASE"/>
    <property type="match status" value="1"/>
</dbReference>
<dbReference type="PANTHER" id="PTHR43757:SF2">
    <property type="entry name" value="AMINOMETHYLTRANSFERASE, MITOCHONDRIAL"/>
    <property type="match status" value="1"/>
</dbReference>
<dbReference type="Pfam" id="PF01571">
    <property type="entry name" value="GCV_T"/>
    <property type="match status" value="1"/>
</dbReference>
<dbReference type="Pfam" id="PF08669">
    <property type="entry name" value="GCV_T_C"/>
    <property type="match status" value="1"/>
</dbReference>
<dbReference type="PIRSF" id="PIRSF006487">
    <property type="entry name" value="GcvT"/>
    <property type="match status" value="1"/>
</dbReference>
<dbReference type="SUPFAM" id="SSF101790">
    <property type="entry name" value="Aminomethyltransferase beta-barrel domain"/>
    <property type="match status" value="1"/>
</dbReference>
<dbReference type="SUPFAM" id="SSF103025">
    <property type="entry name" value="Folate-binding domain"/>
    <property type="match status" value="1"/>
</dbReference>
<reference key="1">
    <citation type="journal article" date="1999" name="Genetics">
        <title>Divergence of the hyperthermophilic archaea Pyrococcus furiosus and P. horikoshii inferred from complete genomic sequences.</title>
        <authorList>
            <person name="Maeder D.L."/>
            <person name="Weiss R.B."/>
            <person name="Dunn D.M."/>
            <person name="Cherry J.L."/>
            <person name="Gonzalez J.M."/>
            <person name="DiRuggiero J."/>
            <person name="Robb F.T."/>
        </authorList>
    </citation>
    <scope>NUCLEOTIDE SEQUENCE [LARGE SCALE GENOMIC DNA]</scope>
    <source>
        <strain>ATCC 43587 / DSM 3638 / JCM 8422 / Vc1</strain>
    </source>
</reference>
<gene>
    <name evidence="1" type="primary">gcvT</name>
    <name type="ordered locus">PF1341</name>
</gene>
<feature type="chain" id="PRO_0000122624" description="Probable aminomethyltransferase">
    <location>
        <begin position="1"/>
        <end position="398"/>
    </location>
</feature>
<protein>
    <recommendedName>
        <fullName evidence="1">Probable aminomethyltransferase</fullName>
        <ecNumber evidence="1">2.1.2.10</ecNumber>
    </recommendedName>
    <alternativeName>
        <fullName evidence="1">Glycine cleavage system T protein</fullName>
    </alternativeName>
</protein>